<keyword id="KW-0030">Aminoacyl-tRNA synthetase</keyword>
<keyword id="KW-0067">ATP-binding</keyword>
<keyword id="KW-0963">Cytoplasm</keyword>
<keyword id="KW-0436">Ligase</keyword>
<keyword id="KW-0547">Nucleotide-binding</keyword>
<keyword id="KW-0648">Protein biosynthesis</keyword>
<sequence>MNIQALLSEKVRQAMIAAGAPADCEPQVRQSAKVQFGDYQANGMMAVAKKLGMAPRQLAEQVLTHLDLNGIASKVEIAGPGFINIFLDPAFLAEHVQQALASDRLGVATPEKQTIVVDYSAPNVAKEMHVGHLRSTIIGDAAVRTLEFLGHKVIRANHVGDWGTQFGMLIAWLEKQQQENAGEMELADLEGFYRDAKKHYDEDEEFAERARNYVVKLQSGDEYFREMWRKLVDITMTQNQITYDRLNVTLTRDDVMGESLYNPMLPGIVADLKAKGLAVESEGATVVFLDEFKNKEGEPMGVIIQKKDGGYLYTTTDIACAKYRYETLHADRVLYYIDSRQHQHLMQAWAIVRKAGYVPESVPLEHHMFGMMLGKDGKPFKTRAGGTVKLADLLDEALERARRLVAEKNPDMPADELEKLANAVGIGAVKYADLSKNRTTDYIFDWDNMLAFEGNTAPYMQYAYTRVLSVFRKAEINEEQLAAAPVIIREDREAQLAARLLQFEETLTVVAREGTPHVMCAYLYDLAGLFSGFYEHCPILSAENEEVRNSRLKLAQLTAKTLKLGLDTLGIETVERM</sequence>
<feature type="chain" id="PRO_1000095362" description="Arginine--tRNA ligase">
    <location>
        <begin position="1"/>
        <end position="577"/>
    </location>
</feature>
<feature type="short sequence motif" description="'HIGH' region">
    <location>
        <begin position="122"/>
        <end position="132"/>
    </location>
</feature>
<comment type="catalytic activity">
    <reaction evidence="1">
        <text>tRNA(Arg) + L-arginine + ATP = L-arginyl-tRNA(Arg) + AMP + diphosphate</text>
        <dbReference type="Rhea" id="RHEA:20301"/>
        <dbReference type="Rhea" id="RHEA-COMP:9658"/>
        <dbReference type="Rhea" id="RHEA-COMP:9673"/>
        <dbReference type="ChEBI" id="CHEBI:30616"/>
        <dbReference type="ChEBI" id="CHEBI:32682"/>
        <dbReference type="ChEBI" id="CHEBI:33019"/>
        <dbReference type="ChEBI" id="CHEBI:78442"/>
        <dbReference type="ChEBI" id="CHEBI:78513"/>
        <dbReference type="ChEBI" id="CHEBI:456215"/>
        <dbReference type="EC" id="6.1.1.19"/>
    </reaction>
</comment>
<comment type="subunit">
    <text evidence="1">Monomer.</text>
</comment>
<comment type="subcellular location">
    <subcellularLocation>
        <location evidence="1">Cytoplasm</location>
    </subcellularLocation>
</comment>
<comment type="similarity">
    <text evidence="1">Belongs to the class-I aminoacyl-tRNA synthetase family.</text>
</comment>
<proteinExistence type="inferred from homology"/>
<gene>
    <name evidence="1" type="primary">argS</name>
    <name type="ordered locus">ECSE_2111</name>
</gene>
<protein>
    <recommendedName>
        <fullName evidence="1">Arginine--tRNA ligase</fullName>
        <ecNumber evidence="1">6.1.1.19</ecNumber>
    </recommendedName>
    <alternativeName>
        <fullName evidence="1">Arginyl-tRNA synthetase</fullName>
        <shortName evidence="1">ArgRS</shortName>
    </alternativeName>
</protein>
<reference key="1">
    <citation type="journal article" date="2008" name="DNA Res.">
        <title>Complete genome sequence and comparative analysis of the wild-type commensal Escherichia coli strain SE11 isolated from a healthy adult.</title>
        <authorList>
            <person name="Oshima K."/>
            <person name="Toh H."/>
            <person name="Ogura Y."/>
            <person name="Sasamoto H."/>
            <person name="Morita H."/>
            <person name="Park S.-H."/>
            <person name="Ooka T."/>
            <person name="Iyoda S."/>
            <person name="Taylor T.D."/>
            <person name="Hayashi T."/>
            <person name="Itoh K."/>
            <person name="Hattori M."/>
        </authorList>
    </citation>
    <scope>NUCLEOTIDE SEQUENCE [LARGE SCALE GENOMIC DNA]</scope>
    <source>
        <strain>SE11</strain>
    </source>
</reference>
<organism>
    <name type="scientific">Escherichia coli (strain SE11)</name>
    <dbReference type="NCBI Taxonomy" id="409438"/>
    <lineage>
        <taxon>Bacteria</taxon>
        <taxon>Pseudomonadati</taxon>
        <taxon>Pseudomonadota</taxon>
        <taxon>Gammaproteobacteria</taxon>
        <taxon>Enterobacterales</taxon>
        <taxon>Enterobacteriaceae</taxon>
        <taxon>Escherichia</taxon>
    </lineage>
</organism>
<evidence type="ECO:0000255" key="1">
    <source>
        <dbReference type="HAMAP-Rule" id="MF_00123"/>
    </source>
</evidence>
<name>SYR_ECOSE</name>
<accession>B6I0S7</accession>
<dbReference type="EC" id="6.1.1.19" evidence="1"/>
<dbReference type="EMBL" id="AP009240">
    <property type="protein sequence ID" value="BAG77635.1"/>
    <property type="molecule type" value="Genomic_DNA"/>
</dbReference>
<dbReference type="RefSeq" id="WP_001025326.1">
    <property type="nucleotide sequence ID" value="NC_011415.1"/>
</dbReference>
<dbReference type="SMR" id="B6I0S7"/>
<dbReference type="KEGG" id="ecy:ECSE_2111"/>
<dbReference type="HOGENOM" id="CLU_006406_5_1_6"/>
<dbReference type="Proteomes" id="UP000008199">
    <property type="component" value="Chromosome"/>
</dbReference>
<dbReference type="GO" id="GO:0005737">
    <property type="term" value="C:cytoplasm"/>
    <property type="evidence" value="ECO:0007669"/>
    <property type="project" value="UniProtKB-SubCell"/>
</dbReference>
<dbReference type="GO" id="GO:0004814">
    <property type="term" value="F:arginine-tRNA ligase activity"/>
    <property type="evidence" value="ECO:0007669"/>
    <property type="project" value="UniProtKB-UniRule"/>
</dbReference>
<dbReference type="GO" id="GO:0005524">
    <property type="term" value="F:ATP binding"/>
    <property type="evidence" value="ECO:0007669"/>
    <property type="project" value="UniProtKB-UniRule"/>
</dbReference>
<dbReference type="GO" id="GO:0006420">
    <property type="term" value="P:arginyl-tRNA aminoacylation"/>
    <property type="evidence" value="ECO:0007669"/>
    <property type="project" value="UniProtKB-UniRule"/>
</dbReference>
<dbReference type="CDD" id="cd07956">
    <property type="entry name" value="Anticodon_Ia_Arg"/>
    <property type="match status" value="1"/>
</dbReference>
<dbReference type="CDD" id="cd00671">
    <property type="entry name" value="ArgRS_core"/>
    <property type="match status" value="1"/>
</dbReference>
<dbReference type="FunFam" id="1.10.730.10:FF:000001">
    <property type="entry name" value="Arginine--tRNA ligase"/>
    <property type="match status" value="1"/>
</dbReference>
<dbReference type="FunFam" id="3.30.1360.70:FF:000001">
    <property type="entry name" value="Arginine--tRNA ligase"/>
    <property type="match status" value="1"/>
</dbReference>
<dbReference type="FunFam" id="3.40.50.620:FF:000030">
    <property type="entry name" value="Arginine--tRNA ligase"/>
    <property type="match status" value="1"/>
</dbReference>
<dbReference type="Gene3D" id="3.30.1360.70">
    <property type="entry name" value="Arginyl tRNA synthetase N-terminal domain"/>
    <property type="match status" value="1"/>
</dbReference>
<dbReference type="Gene3D" id="3.40.50.620">
    <property type="entry name" value="HUPs"/>
    <property type="match status" value="1"/>
</dbReference>
<dbReference type="Gene3D" id="1.10.730.10">
    <property type="entry name" value="Isoleucyl-tRNA Synthetase, Domain 1"/>
    <property type="match status" value="1"/>
</dbReference>
<dbReference type="HAMAP" id="MF_00123">
    <property type="entry name" value="Arg_tRNA_synth"/>
    <property type="match status" value="1"/>
</dbReference>
<dbReference type="InterPro" id="IPR001412">
    <property type="entry name" value="aa-tRNA-synth_I_CS"/>
</dbReference>
<dbReference type="InterPro" id="IPR001278">
    <property type="entry name" value="Arg-tRNA-ligase"/>
</dbReference>
<dbReference type="InterPro" id="IPR005148">
    <property type="entry name" value="Arg-tRNA-synth_N"/>
</dbReference>
<dbReference type="InterPro" id="IPR036695">
    <property type="entry name" value="Arg-tRNA-synth_N_sf"/>
</dbReference>
<dbReference type="InterPro" id="IPR035684">
    <property type="entry name" value="ArgRS_core"/>
</dbReference>
<dbReference type="InterPro" id="IPR008909">
    <property type="entry name" value="DALR_anticod-bd"/>
</dbReference>
<dbReference type="InterPro" id="IPR014729">
    <property type="entry name" value="Rossmann-like_a/b/a_fold"/>
</dbReference>
<dbReference type="InterPro" id="IPR009080">
    <property type="entry name" value="tRNAsynth_Ia_anticodon-bd"/>
</dbReference>
<dbReference type="NCBIfam" id="TIGR00456">
    <property type="entry name" value="argS"/>
    <property type="match status" value="1"/>
</dbReference>
<dbReference type="PANTHER" id="PTHR11956:SF5">
    <property type="entry name" value="ARGININE--TRNA LIGASE, CYTOPLASMIC"/>
    <property type="match status" value="1"/>
</dbReference>
<dbReference type="PANTHER" id="PTHR11956">
    <property type="entry name" value="ARGINYL-TRNA SYNTHETASE"/>
    <property type="match status" value="1"/>
</dbReference>
<dbReference type="Pfam" id="PF03485">
    <property type="entry name" value="Arg_tRNA_synt_N"/>
    <property type="match status" value="1"/>
</dbReference>
<dbReference type="Pfam" id="PF05746">
    <property type="entry name" value="DALR_1"/>
    <property type="match status" value="1"/>
</dbReference>
<dbReference type="Pfam" id="PF00750">
    <property type="entry name" value="tRNA-synt_1d"/>
    <property type="match status" value="1"/>
</dbReference>
<dbReference type="PRINTS" id="PR01038">
    <property type="entry name" value="TRNASYNTHARG"/>
</dbReference>
<dbReference type="SMART" id="SM01016">
    <property type="entry name" value="Arg_tRNA_synt_N"/>
    <property type="match status" value="1"/>
</dbReference>
<dbReference type="SMART" id="SM00836">
    <property type="entry name" value="DALR_1"/>
    <property type="match status" value="1"/>
</dbReference>
<dbReference type="SUPFAM" id="SSF47323">
    <property type="entry name" value="Anticodon-binding domain of a subclass of class I aminoacyl-tRNA synthetases"/>
    <property type="match status" value="1"/>
</dbReference>
<dbReference type="SUPFAM" id="SSF55190">
    <property type="entry name" value="Arginyl-tRNA synthetase (ArgRS), N-terminal 'additional' domain"/>
    <property type="match status" value="1"/>
</dbReference>
<dbReference type="SUPFAM" id="SSF52374">
    <property type="entry name" value="Nucleotidylyl transferase"/>
    <property type="match status" value="1"/>
</dbReference>
<dbReference type="PROSITE" id="PS00178">
    <property type="entry name" value="AA_TRNA_LIGASE_I"/>
    <property type="match status" value="1"/>
</dbReference>